<dbReference type="EMBL" id="CP000422">
    <property type="protein sequence ID" value="ABJ67910.1"/>
    <property type="molecule type" value="Genomic_DNA"/>
</dbReference>
<dbReference type="RefSeq" id="WP_002833579.1">
    <property type="nucleotide sequence ID" value="NC_008525.1"/>
</dbReference>
<dbReference type="SMR" id="Q03FW2"/>
<dbReference type="STRING" id="278197.PEPE_0850"/>
<dbReference type="GeneID" id="33062587"/>
<dbReference type="KEGG" id="ppe:PEPE_0850"/>
<dbReference type="eggNOG" id="COG0335">
    <property type="taxonomic scope" value="Bacteria"/>
</dbReference>
<dbReference type="HOGENOM" id="CLU_103507_2_1_9"/>
<dbReference type="OrthoDB" id="9803541at2"/>
<dbReference type="Proteomes" id="UP000000773">
    <property type="component" value="Chromosome"/>
</dbReference>
<dbReference type="GO" id="GO:0022625">
    <property type="term" value="C:cytosolic large ribosomal subunit"/>
    <property type="evidence" value="ECO:0007669"/>
    <property type="project" value="TreeGrafter"/>
</dbReference>
<dbReference type="GO" id="GO:0003735">
    <property type="term" value="F:structural constituent of ribosome"/>
    <property type="evidence" value="ECO:0007669"/>
    <property type="project" value="InterPro"/>
</dbReference>
<dbReference type="GO" id="GO:0006412">
    <property type="term" value="P:translation"/>
    <property type="evidence" value="ECO:0007669"/>
    <property type="project" value="UniProtKB-UniRule"/>
</dbReference>
<dbReference type="FunFam" id="2.30.30.790:FF:000001">
    <property type="entry name" value="50S ribosomal protein L19"/>
    <property type="match status" value="1"/>
</dbReference>
<dbReference type="Gene3D" id="2.30.30.790">
    <property type="match status" value="1"/>
</dbReference>
<dbReference type="HAMAP" id="MF_00402">
    <property type="entry name" value="Ribosomal_bL19"/>
    <property type="match status" value="1"/>
</dbReference>
<dbReference type="InterPro" id="IPR001857">
    <property type="entry name" value="Ribosomal_bL19"/>
</dbReference>
<dbReference type="InterPro" id="IPR018257">
    <property type="entry name" value="Ribosomal_bL19_CS"/>
</dbReference>
<dbReference type="InterPro" id="IPR038657">
    <property type="entry name" value="Ribosomal_bL19_sf"/>
</dbReference>
<dbReference type="InterPro" id="IPR008991">
    <property type="entry name" value="Translation_prot_SH3-like_sf"/>
</dbReference>
<dbReference type="NCBIfam" id="TIGR01024">
    <property type="entry name" value="rplS_bact"/>
    <property type="match status" value="1"/>
</dbReference>
<dbReference type="PANTHER" id="PTHR15680:SF9">
    <property type="entry name" value="LARGE RIBOSOMAL SUBUNIT PROTEIN BL19M"/>
    <property type="match status" value="1"/>
</dbReference>
<dbReference type="PANTHER" id="PTHR15680">
    <property type="entry name" value="RIBOSOMAL PROTEIN L19"/>
    <property type="match status" value="1"/>
</dbReference>
<dbReference type="Pfam" id="PF01245">
    <property type="entry name" value="Ribosomal_L19"/>
    <property type="match status" value="1"/>
</dbReference>
<dbReference type="PIRSF" id="PIRSF002191">
    <property type="entry name" value="Ribosomal_L19"/>
    <property type="match status" value="1"/>
</dbReference>
<dbReference type="PRINTS" id="PR00061">
    <property type="entry name" value="RIBOSOMALL19"/>
</dbReference>
<dbReference type="SUPFAM" id="SSF50104">
    <property type="entry name" value="Translation proteins SH3-like domain"/>
    <property type="match status" value="1"/>
</dbReference>
<dbReference type="PROSITE" id="PS01015">
    <property type="entry name" value="RIBOSOMAL_L19"/>
    <property type="match status" value="1"/>
</dbReference>
<comment type="function">
    <text evidence="1">This protein is located at the 30S-50S ribosomal subunit interface and may play a role in the structure and function of the aminoacyl-tRNA binding site.</text>
</comment>
<comment type="similarity">
    <text evidence="1">Belongs to the bacterial ribosomal protein bL19 family.</text>
</comment>
<name>RL19_PEDPA</name>
<proteinExistence type="inferred from homology"/>
<accession>Q03FW2</accession>
<evidence type="ECO:0000255" key="1">
    <source>
        <dbReference type="HAMAP-Rule" id="MF_00402"/>
    </source>
</evidence>
<evidence type="ECO:0000305" key="2"/>
<keyword id="KW-0687">Ribonucleoprotein</keyword>
<keyword id="KW-0689">Ribosomal protein</keyword>
<reference key="1">
    <citation type="journal article" date="2006" name="Proc. Natl. Acad. Sci. U.S.A.">
        <title>Comparative genomics of the lactic acid bacteria.</title>
        <authorList>
            <person name="Makarova K.S."/>
            <person name="Slesarev A."/>
            <person name="Wolf Y.I."/>
            <person name="Sorokin A."/>
            <person name="Mirkin B."/>
            <person name="Koonin E.V."/>
            <person name="Pavlov A."/>
            <person name="Pavlova N."/>
            <person name="Karamychev V."/>
            <person name="Polouchine N."/>
            <person name="Shakhova V."/>
            <person name="Grigoriev I."/>
            <person name="Lou Y."/>
            <person name="Rohksar D."/>
            <person name="Lucas S."/>
            <person name="Huang K."/>
            <person name="Goodstein D.M."/>
            <person name="Hawkins T."/>
            <person name="Plengvidhya V."/>
            <person name="Welker D."/>
            <person name="Hughes J."/>
            <person name="Goh Y."/>
            <person name="Benson A."/>
            <person name="Baldwin K."/>
            <person name="Lee J.-H."/>
            <person name="Diaz-Muniz I."/>
            <person name="Dosti B."/>
            <person name="Smeianov V."/>
            <person name="Wechter W."/>
            <person name="Barabote R."/>
            <person name="Lorca G."/>
            <person name="Altermann E."/>
            <person name="Barrangou R."/>
            <person name="Ganesan B."/>
            <person name="Xie Y."/>
            <person name="Rawsthorne H."/>
            <person name="Tamir D."/>
            <person name="Parker C."/>
            <person name="Breidt F."/>
            <person name="Broadbent J.R."/>
            <person name="Hutkins R."/>
            <person name="O'Sullivan D."/>
            <person name="Steele J."/>
            <person name="Unlu G."/>
            <person name="Saier M.H. Jr."/>
            <person name="Klaenhammer T."/>
            <person name="Richardson P."/>
            <person name="Kozyavkin S."/>
            <person name="Weimer B.C."/>
            <person name="Mills D.A."/>
        </authorList>
    </citation>
    <scope>NUCLEOTIDE SEQUENCE [LARGE SCALE GENOMIC DNA]</scope>
    <source>
        <strain>ATCC 25745 / CCUG 21536 / LMG 10740 / 183-1w</strain>
    </source>
</reference>
<feature type="chain" id="PRO_1000049715" description="Large ribosomal subunit protein bL19">
    <location>
        <begin position="1"/>
        <end position="119"/>
    </location>
</feature>
<organism>
    <name type="scientific">Pediococcus pentosaceus (strain ATCC 25745 / CCUG 21536 / LMG 10740 / 183-1w)</name>
    <dbReference type="NCBI Taxonomy" id="278197"/>
    <lineage>
        <taxon>Bacteria</taxon>
        <taxon>Bacillati</taxon>
        <taxon>Bacillota</taxon>
        <taxon>Bacilli</taxon>
        <taxon>Lactobacillales</taxon>
        <taxon>Lactobacillaceae</taxon>
        <taxon>Pediococcus</taxon>
    </lineage>
</organism>
<sequence>MNLLIDKITKDQLRSDIPEFRAGDTVRVHAKVVEGDHERIQLFEGVVIKRHGSGISATYTVRKISNGVGVERTFPLHSPRVAKIEVIRHGRVRRAKLYYLRALHGKAARIKEDRRKAFK</sequence>
<protein>
    <recommendedName>
        <fullName evidence="1">Large ribosomal subunit protein bL19</fullName>
    </recommendedName>
    <alternativeName>
        <fullName evidence="2">50S ribosomal protein L19</fullName>
    </alternativeName>
</protein>
<gene>
    <name evidence="1" type="primary">rplS</name>
    <name type="ordered locus">PEPE_0850</name>
</gene>